<dbReference type="EMBL" id="AE014075">
    <property type="protein sequence ID" value="AAN83067.1"/>
    <property type="status" value="ALT_INIT"/>
    <property type="molecule type" value="Genomic_DNA"/>
</dbReference>
<dbReference type="RefSeq" id="WP_001296581.1">
    <property type="nucleotide sequence ID" value="NZ_CP051263.1"/>
</dbReference>
<dbReference type="STRING" id="199310.c4635"/>
<dbReference type="KEGG" id="ecc:c4635"/>
<dbReference type="eggNOG" id="COG2091">
    <property type="taxonomic scope" value="Bacteria"/>
</dbReference>
<dbReference type="HOGENOM" id="CLU_096413_0_0_6"/>
<dbReference type="Proteomes" id="UP000001410">
    <property type="component" value="Chromosome"/>
</dbReference>
<dbReference type="GO" id="GO:0005829">
    <property type="term" value="C:cytosol"/>
    <property type="evidence" value="ECO:0007669"/>
    <property type="project" value="TreeGrafter"/>
</dbReference>
<dbReference type="GO" id="GO:0008897">
    <property type="term" value="F:holo-[acyl-carrier-protein] synthase activity"/>
    <property type="evidence" value="ECO:0007669"/>
    <property type="project" value="InterPro"/>
</dbReference>
<dbReference type="GO" id="GO:0000287">
    <property type="term" value="F:magnesium ion binding"/>
    <property type="evidence" value="ECO:0007669"/>
    <property type="project" value="InterPro"/>
</dbReference>
<dbReference type="GO" id="GO:0019878">
    <property type="term" value="P:lysine biosynthetic process via aminoadipic acid"/>
    <property type="evidence" value="ECO:0007669"/>
    <property type="project" value="TreeGrafter"/>
</dbReference>
<dbReference type="Gene3D" id="3.90.470.20">
    <property type="entry name" value="4'-phosphopantetheinyl transferase domain"/>
    <property type="match status" value="1"/>
</dbReference>
<dbReference type="InterPro" id="IPR037143">
    <property type="entry name" value="4-PPantetheinyl_Trfase_dom_sf"/>
</dbReference>
<dbReference type="InterPro" id="IPR050559">
    <property type="entry name" value="P-Pant_transferase_sf"/>
</dbReference>
<dbReference type="PANTHER" id="PTHR12215:SF22">
    <property type="entry name" value="CYTOPLASMIC PROTEIN"/>
    <property type="match status" value="1"/>
</dbReference>
<dbReference type="PANTHER" id="PTHR12215">
    <property type="entry name" value="PHOSPHOPANTETHEINE TRANSFERASE"/>
    <property type="match status" value="1"/>
</dbReference>
<gene>
    <name type="primary">yieE</name>
    <name type="ordered locus">c4635</name>
</gene>
<name>YIEE_ECOL6</name>
<comment type="sequence caution" evidence="1">
    <conflict type="erroneous initiation">
        <sequence resource="EMBL-CDS" id="AAN83067"/>
    </conflict>
</comment>
<evidence type="ECO:0000305" key="1"/>
<organism>
    <name type="scientific">Escherichia coli O6:H1 (strain CFT073 / ATCC 700928 / UPEC)</name>
    <dbReference type="NCBI Taxonomy" id="199310"/>
    <lineage>
        <taxon>Bacteria</taxon>
        <taxon>Pseudomonadati</taxon>
        <taxon>Pseudomonadota</taxon>
        <taxon>Gammaproteobacteria</taxon>
        <taxon>Enterobacterales</taxon>
        <taxon>Enterobacteriaceae</taxon>
        <taxon>Escherichia</taxon>
    </lineage>
</organism>
<sequence>MATHFARGILTEGHLISVRLPSQCHQEARNIPPHRQSRFLASRGLLAELMFMLYGIGELPEIVTLPKGKPVFSDKNLPSFSISYAGNMVGVALTTEGECGLDMELQRATRGFHSPHAPDNHTFSSNESLWISKQNDPNEARAQLITLRRSVLKLTGDVLNDDPRDLQLLPIAGRLKCAHVNHVEALCDAEDVLVWSVAVTPTIEKLSVWELDGKHGWKSLPDIHSRANNPTSRMMRFAQLSTVKAFSPN</sequence>
<reference key="1">
    <citation type="journal article" date="2002" name="Proc. Natl. Acad. Sci. U.S.A.">
        <title>Extensive mosaic structure revealed by the complete genome sequence of uropathogenic Escherichia coli.</title>
        <authorList>
            <person name="Welch R.A."/>
            <person name="Burland V."/>
            <person name="Plunkett G. III"/>
            <person name="Redford P."/>
            <person name="Roesch P."/>
            <person name="Rasko D."/>
            <person name="Buckles E.L."/>
            <person name="Liou S.-R."/>
            <person name="Boutin A."/>
            <person name="Hackett J."/>
            <person name="Stroud D."/>
            <person name="Mayhew G.F."/>
            <person name="Rose D.J."/>
            <person name="Zhou S."/>
            <person name="Schwartz D.C."/>
            <person name="Perna N.T."/>
            <person name="Mobley H.L.T."/>
            <person name="Donnenberg M.S."/>
            <person name="Blattner F.R."/>
        </authorList>
    </citation>
    <scope>NUCLEOTIDE SEQUENCE [LARGE SCALE GENOMIC DNA]</scope>
    <source>
        <strain>CFT073 / ATCC 700928 / UPEC</strain>
    </source>
</reference>
<feature type="chain" id="PRO_0000169637" description="Uncharacterized protein YieE">
    <location>
        <begin position="1"/>
        <end position="249"/>
    </location>
</feature>
<proteinExistence type="predicted"/>
<accession>P0ADM9</accession>
<accession>P31464</accession>
<accession>P76740</accession>
<protein>
    <recommendedName>
        <fullName>Uncharacterized protein YieE</fullName>
    </recommendedName>
</protein>
<keyword id="KW-1185">Reference proteome</keyword>